<evidence type="ECO:0000250" key="1"/>
<evidence type="ECO:0000250" key="2">
    <source>
        <dbReference type="UniProtKB" id="P68600"/>
    </source>
</evidence>
<evidence type="ECO:0000305" key="3"/>
<organismHost>
    <name type="scientific">Homo sapiens</name>
    <name type="common">Human</name>
    <dbReference type="NCBI Taxonomy" id="9606"/>
</organismHost>
<accession>P68599</accession>
<accession>P17363</accession>
<feature type="chain" id="PRO_0000099387" description="Interferon antagonist OPG027">
    <location>
        <begin position="1"/>
        <end position="150"/>
    </location>
</feature>
<organism>
    <name type="scientific">Vaccinia virus (strain Copenhagen)</name>
    <name type="common">VACV</name>
    <dbReference type="NCBI Taxonomy" id="10249"/>
    <lineage>
        <taxon>Viruses</taxon>
        <taxon>Varidnaviria</taxon>
        <taxon>Bamfordvirae</taxon>
        <taxon>Nucleocytoviricota</taxon>
        <taxon>Pokkesviricetes</taxon>
        <taxon>Chitovirales</taxon>
        <taxon>Poxviridae</taxon>
        <taxon>Chordopoxvirinae</taxon>
        <taxon>Orthopoxvirus</taxon>
        <taxon>Vaccinia virus</taxon>
    </lineage>
</organism>
<reference key="1">
    <citation type="journal article" date="1990" name="Virology">
        <title>The complete DNA sequence of vaccinia virus.</title>
        <authorList>
            <person name="Goebel S.J."/>
            <person name="Johnson G.P."/>
            <person name="Perkus M.E."/>
            <person name="Davis S.W."/>
            <person name="Winslow J.P."/>
            <person name="Paoletti E."/>
        </authorList>
    </citation>
    <scope>NUCLEOTIDE SEQUENCE [LARGE SCALE GENOMIC DNA]</scope>
</reference>
<reference key="2">
    <citation type="journal article" date="1990" name="Virology">
        <title>Appendix to 'The complete DNA sequence of vaccinia virus'.</title>
        <authorList>
            <person name="Goebel S.J."/>
            <person name="Johnson G.P."/>
            <person name="Perkus M.E."/>
            <person name="Davis S.W."/>
            <person name="Winslow J.P."/>
            <person name="Paoletti E."/>
        </authorList>
    </citation>
    <scope>NUCLEOTIDE SEQUENCE [LARGE SCALE GENOMIC DNA]</scope>
</reference>
<comment type="function">
    <text evidence="1">Inhibits antiviral activity induced by type I interferons. Does not block signal transduction of IFN, but is important to counteract the host antiviral state induced by a pre-treatment with IFN (By similarity).</text>
</comment>
<comment type="induction">
    <text evidence="2">Expressed in the early phase of the viral replicative cycle.</text>
</comment>
<comment type="similarity">
    <text evidence="3">Belongs to the orthopoxvirus OPG027 family.</text>
</comment>
<name>PG027_VACCC</name>
<gene>
    <name type="primary">OPG027</name>
    <name type="synonym">C7L</name>
</gene>
<sequence length="150" mass="17999">MGIQHEFDIIINGDIALRNLQLHKGDNYGCKLKIISNDYKKLKFRFIIRPDWSEIDEVKGLTVFANNYAVKVNKVDDTFYYVIYEAVIHLYNKKTEILIYSDDENELFKHYYPYISLNMISKKYKVKEENYSSPYIEHPLIPYRDYESMD</sequence>
<protein>
    <recommendedName>
        <fullName>Interferon antagonist OPG027</fullName>
    </recommendedName>
    <alternativeName>
        <fullName>Host range protein 2</fullName>
    </alternativeName>
</protein>
<keyword id="KW-0244">Early protein</keyword>
<keyword id="KW-0945">Host-virus interaction</keyword>
<keyword id="KW-1090">Inhibition of host innate immune response by virus</keyword>
<keyword id="KW-1185">Reference proteome</keyword>
<keyword id="KW-0899">Viral immunoevasion</keyword>
<dbReference type="EMBL" id="M35027">
    <property type="protein sequence ID" value="AAA47993.1"/>
    <property type="molecule type" value="Genomic_DNA"/>
</dbReference>
<dbReference type="PIR" id="A33348">
    <property type="entry name" value="WZVZB1"/>
</dbReference>
<dbReference type="SMR" id="P68599"/>
<dbReference type="Proteomes" id="UP000008269">
    <property type="component" value="Segment"/>
</dbReference>
<dbReference type="GO" id="GO:0052170">
    <property type="term" value="P:symbiont-mediated suppression of host innate immune response"/>
    <property type="evidence" value="ECO:0007669"/>
    <property type="project" value="UniProtKB-KW"/>
</dbReference>
<dbReference type="GO" id="GO:0016032">
    <property type="term" value="P:viral process"/>
    <property type="evidence" value="ECO:0007669"/>
    <property type="project" value="InterPro"/>
</dbReference>
<dbReference type="InterPro" id="IPR004967">
    <property type="entry name" value="Poxvirus_C7/F8A"/>
</dbReference>
<dbReference type="Pfam" id="PF03287">
    <property type="entry name" value="Pox_C7_F8A"/>
    <property type="match status" value="1"/>
</dbReference>
<dbReference type="PIRSF" id="PIRSF003779">
    <property type="entry name" value="VAC_C7L"/>
    <property type="match status" value="1"/>
</dbReference>
<proteinExistence type="inferred from homology"/>